<comment type="function">
    <text evidence="1">Despite the protein kinase domain is proposed to act predominantly as an ATPase (By similarity).</text>
</comment>
<comment type="catalytic activity">
    <reaction>
        <text>L-seryl-[protein] + ATP = O-phospho-L-seryl-[protein] + ADP + H(+)</text>
        <dbReference type="Rhea" id="RHEA:17989"/>
        <dbReference type="Rhea" id="RHEA-COMP:9863"/>
        <dbReference type="Rhea" id="RHEA-COMP:11604"/>
        <dbReference type="ChEBI" id="CHEBI:15378"/>
        <dbReference type="ChEBI" id="CHEBI:29999"/>
        <dbReference type="ChEBI" id="CHEBI:30616"/>
        <dbReference type="ChEBI" id="CHEBI:83421"/>
        <dbReference type="ChEBI" id="CHEBI:456216"/>
        <dbReference type="EC" id="2.7.11.1"/>
    </reaction>
</comment>
<comment type="catalytic activity">
    <reaction>
        <text>L-threonyl-[protein] + ATP = O-phospho-L-threonyl-[protein] + ADP + H(+)</text>
        <dbReference type="Rhea" id="RHEA:46608"/>
        <dbReference type="Rhea" id="RHEA-COMP:11060"/>
        <dbReference type="Rhea" id="RHEA-COMP:11605"/>
        <dbReference type="ChEBI" id="CHEBI:15378"/>
        <dbReference type="ChEBI" id="CHEBI:30013"/>
        <dbReference type="ChEBI" id="CHEBI:30616"/>
        <dbReference type="ChEBI" id="CHEBI:61977"/>
        <dbReference type="ChEBI" id="CHEBI:456216"/>
        <dbReference type="EC" id="2.7.11.1"/>
    </reaction>
</comment>
<comment type="catalytic activity">
    <reaction evidence="1">
        <text>ATP + H2O = ADP + phosphate + H(+)</text>
        <dbReference type="Rhea" id="RHEA:13065"/>
        <dbReference type="ChEBI" id="CHEBI:15377"/>
        <dbReference type="ChEBI" id="CHEBI:15378"/>
        <dbReference type="ChEBI" id="CHEBI:30616"/>
        <dbReference type="ChEBI" id="CHEBI:43474"/>
        <dbReference type="ChEBI" id="CHEBI:456216"/>
    </reaction>
</comment>
<comment type="similarity">
    <text evidence="3">Belongs to the protein kinase superfamily. RIO-type Ser/Thr kinase family.</text>
</comment>
<sequence length="186" mass="21739">MVFRAVSGKKFVAVKIFKMSTLKFMSIRKYIEGDQRFSKIRIDRNDIVPVWVRKEYTNLMALENAHVPAPKPIGFFKNILVMSYIGTKSGPAPQLKDVEIDEGIYDQVIDGMRRMYANRIVHADLSEYNMLFHRKVYFIDLAQAVDMDHPMAAEFLERDIVNVSNFFQKHGIETDPDKIREYIKKK</sequence>
<name>RIO1_THEAC</name>
<proteinExistence type="inferred from homology"/>
<gene>
    <name type="primary">rio1</name>
    <name type="ordered locus">Ta0396</name>
</gene>
<accession>Q03021</accession>
<protein>
    <recommendedName>
        <fullName>RIO-type serine/threonine-protein kinase Rio1</fullName>
        <ecNumber>2.7.11.1</ecNumber>
        <ecNumber evidence="1">3.6.1.-</ecNumber>
    </recommendedName>
</protein>
<feature type="chain" id="PRO_0000213536" description="RIO-type serine/threonine-protein kinase Rio1">
    <location>
        <begin position="1"/>
        <end position="186"/>
    </location>
</feature>
<feature type="active site" description="Proton acceptor" evidence="2">
    <location>
        <position position="124"/>
    </location>
</feature>
<feature type="active site" description="4-aspartylphosphate intermediate" evidence="2">
    <location>
        <position position="140"/>
    </location>
</feature>
<feature type="binding site" evidence="2">
    <location>
        <position position="15"/>
    </location>
    <ligand>
        <name>ATP</name>
        <dbReference type="ChEBI" id="CHEBI:30616"/>
    </ligand>
</feature>
<feature type="binding site" evidence="2">
    <location>
        <position position="129"/>
    </location>
    <ligand>
        <name>Mg(2+)</name>
        <dbReference type="ChEBI" id="CHEBI:18420"/>
    </ligand>
</feature>
<feature type="binding site" evidence="2">
    <location>
        <position position="140"/>
    </location>
    <ligand>
        <name>Mg(2+)</name>
        <dbReference type="ChEBI" id="CHEBI:18420"/>
    </ligand>
</feature>
<dbReference type="EC" id="2.7.11.1"/>
<dbReference type="EC" id="3.6.1.-" evidence="1"/>
<dbReference type="EMBL" id="X68198">
    <property type="protein sequence ID" value="CAA48285.1"/>
    <property type="molecule type" value="Genomic_DNA"/>
</dbReference>
<dbReference type="EMBL" id="AL445064">
    <property type="protein sequence ID" value="CAC11539.1"/>
    <property type="molecule type" value="Genomic_DNA"/>
</dbReference>
<dbReference type="PIR" id="S26727">
    <property type="entry name" value="S26727"/>
</dbReference>
<dbReference type="SMR" id="Q03021"/>
<dbReference type="FunCoup" id="Q03021">
    <property type="interactions" value="6"/>
</dbReference>
<dbReference type="STRING" id="273075.gene:9571615"/>
<dbReference type="PaxDb" id="273075-Ta0396m"/>
<dbReference type="EnsemblBacteria" id="CAC11539">
    <property type="protein sequence ID" value="CAC11539"/>
    <property type="gene ID" value="CAC11539"/>
</dbReference>
<dbReference type="KEGG" id="tac:Ta0396"/>
<dbReference type="eggNOG" id="arCOG01180">
    <property type="taxonomic scope" value="Archaea"/>
</dbReference>
<dbReference type="HOGENOM" id="CLU_018693_3_3_2"/>
<dbReference type="InParanoid" id="Q03021"/>
<dbReference type="Proteomes" id="UP000001024">
    <property type="component" value="Chromosome"/>
</dbReference>
<dbReference type="GO" id="GO:0005524">
    <property type="term" value="F:ATP binding"/>
    <property type="evidence" value="ECO:0007669"/>
    <property type="project" value="UniProtKB-KW"/>
</dbReference>
<dbReference type="GO" id="GO:0016787">
    <property type="term" value="F:hydrolase activity"/>
    <property type="evidence" value="ECO:0007669"/>
    <property type="project" value="UniProtKB-KW"/>
</dbReference>
<dbReference type="GO" id="GO:0046872">
    <property type="term" value="F:metal ion binding"/>
    <property type="evidence" value="ECO:0007669"/>
    <property type="project" value="UniProtKB-KW"/>
</dbReference>
<dbReference type="GO" id="GO:0106310">
    <property type="term" value="F:protein serine kinase activity"/>
    <property type="evidence" value="ECO:0007669"/>
    <property type="project" value="RHEA"/>
</dbReference>
<dbReference type="GO" id="GO:0004674">
    <property type="term" value="F:protein serine/threonine kinase activity"/>
    <property type="evidence" value="ECO:0007669"/>
    <property type="project" value="UniProtKB-KW"/>
</dbReference>
<dbReference type="CDD" id="cd05145">
    <property type="entry name" value="RIO1_like"/>
    <property type="match status" value="1"/>
</dbReference>
<dbReference type="Gene3D" id="3.30.200.20">
    <property type="entry name" value="Phosphorylase Kinase, domain 1"/>
    <property type="match status" value="1"/>
</dbReference>
<dbReference type="Gene3D" id="1.10.510.10">
    <property type="entry name" value="Transferase(Phosphotransferase) domain 1"/>
    <property type="match status" value="1"/>
</dbReference>
<dbReference type="InterPro" id="IPR011009">
    <property type="entry name" value="Kinase-like_dom_sf"/>
</dbReference>
<dbReference type="InterPro" id="IPR051272">
    <property type="entry name" value="RIO-type_Ser/Thr_kinase"/>
</dbReference>
<dbReference type="InterPro" id="IPR018934">
    <property type="entry name" value="RIO_dom"/>
</dbReference>
<dbReference type="InterPro" id="IPR000687">
    <property type="entry name" value="RIO_kinase"/>
</dbReference>
<dbReference type="InterPro" id="IPR018935">
    <property type="entry name" value="RIO_kinase_CS"/>
</dbReference>
<dbReference type="InterPro" id="IPR008266">
    <property type="entry name" value="Tyr_kinase_AS"/>
</dbReference>
<dbReference type="PANTHER" id="PTHR45723">
    <property type="entry name" value="SERINE/THREONINE-PROTEIN KINASE RIO1"/>
    <property type="match status" value="1"/>
</dbReference>
<dbReference type="Pfam" id="PF01163">
    <property type="entry name" value="RIO1"/>
    <property type="match status" value="1"/>
</dbReference>
<dbReference type="SMART" id="SM00090">
    <property type="entry name" value="RIO"/>
    <property type="match status" value="1"/>
</dbReference>
<dbReference type="SUPFAM" id="SSF56112">
    <property type="entry name" value="Protein kinase-like (PK-like)"/>
    <property type="match status" value="1"/>
</dbReference>
<dbReference type="PROSITE" id="PS01245">
    <property type="entry name" value="RIO1"/>
    <property type="match status" value="1"/>
</dbReference>
<evidence type="ECO:0000250" key="1">
    <source>
        <dbReference type="UniProtKB" id="G0S3J5"/>
    </source>
</evidence>
<evidence type="ECO:0000250" key="2">
    <source>
        <dbReference type="UniProtKB" id="Q9BRS2"/>
    </source>
</evidence>
<evidence type="ECO:0000305" key="3"/>
<keyword id="KW-0067">ATP-binding</keyword>
<keyword id="KW-0378">Hydrolase</keyword>
<keyword id="KW-0418">Kinase</keyword>
<keyword id="KW-0460">Magnesium</keyword>
<keyword id="KW-0479">Metal-binding</keyword>
<keyword id="KW-0547">Nucleotide-binding</keyword>
<keyword id="KW-1185">Reference proteome</keyword>
<keyword id="KW-0723">Serine/threonine-protein kinase</keyword>
<keyword id="KW-0808">Transferase</keyword>
<organism>
    <name type="scientific">Thermoplasma acidophilum (strain ATCC 25905 / DSM 1728 / JCM 9062 / NBRC 15155 / AMRC-C165)</name>
    <dbReference type="NCBI Taxonomy" id="273075"/>
    <lineage>
        <taxon>Archaea</taxon>
        <taxon>Methanobacteriati</taxon>
        <taxon>Thermoplasmatota</taxon>
        <taxon>Thermoplasmata</taxon>
        <taxon>Thermoplasmatales</taxon>
        <taxon>Thermoplasmataceae</taxon>
        <taxon>Thermoplasma</taxon>
    </lineage>
</organism>
<reference key="1">
    <citation type="journal article" date="1992" name="Nucleic Acids Res.">
        <title>Nucleotide sequence of the genes encoding the subunits H, B, A' and A'' of the DNA-dependent RNA polymerase and the initiator tRNA from Thermoplasma acidophilum.</title>
        <authorList>
            <person name="Klenk H.-P."/>
            <person name="Renner O."/>
            <person name="Schwass V."/>
            <person name="Zillig W."/>
        </authorList>
    </citation>
    <scope>NUCLEOTIDE SEQUENCE [GENOMIC DNA]</scope>
    <source>
        <strain>ATCC 25905 / DSM 1728 / JCM 9062 / NBRC 15155 / AMRC-C165</strain>
    </source>
</reference>
<reference key="2">
    <citation type="journal article" date="2000" name="Nature">
        <title>The genome sequence of the thermoacidophilic scavenger Thermoplasma acidophilum.</title>
        <authorList>
            <person name="Ruepp A."/>
            <person name="Graml W."/>
            <person name="Santos-Martinez M.-L."/>
            <person name="Koretke K.K."/>
            <person name="Volker C."/>
            <person name="Mewes H.-W."/>
            <person name="Frishman D."/>
            <person name="Stocker S."/>
            <person name="Lupas A.N."/>
            <person name="Baumeister W."/>
        </authorList>
    </citation>
    <scope>NUCLEOTIDE SEQUENCE [LARGE SCALE GENOMIC DNA]</scope>
    <source>
        <strain>ATCC 25905 / DSM 1728 / JCM 9062 / NBRC 15155 / AMRC-C165</strain>
    </source>
</reference>